<protein>
    <recommendedName>
        <fullName evidence="1">Large ribosomal subunit protein uL13</fullName>
    </recommendedName>
    <alternativeName>
        <fullName evidence="2">50S ribosomal protein L13</fullName>
    </alternativeName>
</protein>
<accession>B9DYE3</accession>
<evidence type="ECO:0000255" key="1">
    <source>
        <dbReference type="HAMAP-Rule" id="MF_01366"/>
    </source>
</evidence>
<evidence type="ECO:0000305" key="2"/>
<feature type="chain" id="PRO_1000166861" description="Large ribosomal subunit protein uL13">
    <location>
        <begin position="1"/>
        <end position="144"/>
    </location>
</feature>
<dbReference type="EMBL" id="AP009049">
    <property type="protein sequence ID" value="BAH05268.1"/>
    <property type="molecule type" value="Genomic_DNA"/>
</dbReference>
<dbReference type="RefSeq" id="WP_011988837.1">
    <property type="nucleotide sequence ID" value="NC_011837.1"/>
</dbReference>
<dbReference type="SMR" id="B9DYE3"/>
<dbReference type="KEGG" id="ckr:CKR_0217"/>
<dbReference type="HOGENOM" id="CLU_082184_2_2_9"/>
<dbReference type="Proteomes" id="UP000007969">
    <property type="component" value="Chromosome"/>
</dbReference>
<dbReference type="GO" id="GO:0022625">
    <property type="term" value="C:cytosolic large ribosomal subunit"/>
    <property type="evidence" value="ECO:0007669"/>
    <property type="project" value="TreeGrafter"/>
</dbReference>
<dbReference type="GO" id="GO:0003729">
    <property type="term" value="F:mRNA binding"/>
    <property type="evidence" value="ECO:0007669"/>
    <property type="project" value="TreeGrafter"/>
</dbReference>
<dbReference type="GO" id="GO:0003735">
    <property type="term" value="F:structural constituent of ribosome"/>
    <property type="evidence" value="ECO:0007669"/>
    <property type="project" value="InterPro"/>
</dbReference>
<dbReference type="GO" id="GO:0017148">
    <property type="term" value="P:negative regulation of translation"/>
    <property type="evidence" value="ECO:0007669"/>
    <property type="project" value="TreeGrafter"/>
</dbReference>
<dbReference type="GO" id="GO:0006412">
    <property type="term" value="P:translation"/>
    <property type="evidence" value="ECO:0007669"/>
    <property type="project" value="UniProtKB-UniRule"/>
</dbReference>
<dbReference type="CDD" id="cd00392">
    <property type="entry name" value="Ribosomal_L13"/>
    <property type="match status" value="1"/>
</dbReference>
<dbReference type="FunFam" id="3.90.1180.10:FF:000001">
    <property type="entry name" value="50S ribosomal protein L13"/>
    <property type="match status" value="1"/>
</dbReference>
<dbReference type="Gene3D" id="3.90.1180.10">
    <property type="entry name" value="Ribosomal protein L13"/>
    <property type="match status" value="1"/>
</dbReference>
<dbReference type="HAMAP" id="MF_01366">
    <property type="entry name" value="Ribosomal_uL13"/>
    <property type="match status" value="1"/>
</dbReference>
<dbReference type="InterPro" id="IPR005822">
    <property type="entry name" value="Ribosomal_uL13"/>
</dbReference>
<dbReference type="InterPro" id="IPR005823">
    <property type="entry name" value="Ribosomal_uL13_bac-type"/>
</dbReference>
<dbReference type="InterPro" id="IPR023563">
    <property type="entry name" value="Ribosomal_uL13_CS"/>
</dbReference>
<dbReference type="InterPro" id="IPR036899">
    <property type="entry name" value="Ribosomal_uL13_sf"/>
</dbReference>
<dbReference type="NCBIfam" id="TIGR01066">
    <property type="entry name" value="rplM_bact"/>
    <property type="match status" value="1"/>
</dbReference>
<dbReference type="PANTHER" id="PTHR11545:SF2">
    <property type="entry name" value="LARGE RIBOSOMAL SUBUNIT PROTEIN UL13M"/>
    <property type="match status" value="1"/>
</dbReference>
<dbReference type="PANTHER" id="PTHR11545">
    <property type="entry name" value="RIBOSOMAL PROTEIN L13"/>
    <property type="match status" value="1"/>
</dbReference>
<dbReference type="Pfam" id="PF00572">
    <property type="entry name" value="Ribosomal_L13"/>
    <property type="match status" value="1"/>
</dbReference>
<dbReference type="PIRSF" id="PIRSF002181">
    <property type="entry name" value="Ribosomal_L13"/>
    <property type="match status" value="1"/>
</dbReference>
<dbReference type="SUPFAM" id="SSF52161">
    <property type="entry name" value="Ribosomal protein L13"/>
    <property type="match status" value="1"/>
</dbReference>
<dbReference type="PROSITE" id="PS00783">
    <property type="entry name" value="RIBOSOMAL_L13"/>
    <property type="match status" value="1"/>
</dbReference>
<organism>
    <name type="scientific">Clostridium kluyveri (strain NBRC 12016)</name>
    <dbReference type="NCBI Taxonomy" id="583346"/>
    <lineage>
        <taxon>Bacteria</taxon>
        <taxon>Bacillati</taxon>
        <taxon>Bacillota</taxon>
        <taxon>Clostridia</taxon>
        <taxon>Eubacteriales</taxon>
        <taxon>Clostridiaceae</taxon>
        <taxon>Clostridium</taxon>
    </lineage>
</organism>
<keyword id="KW-0687">Ribonucleoprotein</keyword>
<keyword id="KW-0689">Ribosomal protein</keyword>
<gene>
    <name evidence="1" type="primary">rplM</name>
    <name type="ordered locus">CKR_0217</name>
</gene>
<name>RL13_CLOK1</name>
<sequence length="144" mass="16508">MKSYIAKAEQIERKWYVVDAAGKPLGRVASQVASVLRGKHKPIFTPHVDTGDFVIVINSEKVLLTGKKLDQKMLRHHSLYPGGLKETPYREALNKKPEFVFQEAVRRMLPKGVLGRKMLKKLKVYRGTEHNNEAQKPEVLELKY</sequence>
<comment type="function">
    <text evidence="1">This protein is one of the early assembly proteins of the 50S ribosomal subunit, although it is not seen to bind rRNA by itself. It is important during the early stages of 50S assembly.</text>
</comment>
<comment type="subunit">
    <text evidence="1">Part of the 50S ribosomal subunit.</text>
</comment>
<comment type="similarity">
    <text evidence="1">Belongs to the universal ribosomal protein uL13 family.</text>
</comment>
<proteinExistence type="inferred from homology"/>
<reference key="1">
    <citation type="submission" date="2005-09" db="EMBL/GenBank/DDBJ databases">
        <title>Complete genome sequence of Clostridium kluyveri and comparative genomics of Clostridia species.</title>
        <authorList>
            <person name="Inui M."/>
            <person name="Nonaka H."/>
            <person name="Shinoda Y."/>
            <person name="Ikenaga Y."/>
            <person name="Abe M."/>
            <person name="Naito K."/>
            <person name="Vertes A.A."/>
            <person name="Yukawa H."/>
        </authorList>
    </citation>
    <scope>NUCLEOTIDE SEQUENCE [LARGE SCALE GENOMIC DNA]</scope>
    <source>
        <strain>NBRC 12016</strain>
    </source>
</reference>